<comment type="function">
    <text evidence="1">ATPase required for the correct placement of the division site.</text>
</comment>
<comment type="subcellular location">
    <subcellularLocation>
        <location>Plastid</location>
        <location>Chloroplast</location>
    </subcellularLocation>
</comment>
<comment type="similarity">
    <text evidence="3">Belongs to the ParA family. MinD subfamily.</text>
</comment>
<evidence type="ECO:0000250" key="1"/>
<evidence type="ECO:0000250" key="2">
    <source>
        <dbReference type="UniProtKB" id="Q72H90"/>
    </source>
</evidence>
<evidence type="ECO:0000305" key="3"/>
<geneLocation type="chloroplast"/>
<keyword id="KW-0067">ATP-binding</keyword>
<keyword id="KW-0131">Cell cycle</keyword>
<keyword id="KW-0132">Cell division</keyword>
<keyword id="KW-0150">Chloroplast</keyword>
<keyword id="KW-0547">Nucleotide-binding</keyword>
<keyword id="KW-0934">Plastid</keyword>
<keyword id="KW-0717">Septation</keyword>
<proteinExistence type="inferred from homology"/>
<organism>
    <name type="scientific">Guillardia theta</name>
    <name type="common">Cryptophyte</name>
    <name type="synonym">Cryptomonas phi</name>
    <dbReference type="NCBI Taxonomy" id="55529"/>
    <lineage>
        <taxon>Eukaryota</taxon>
        <taxon>Cryptophyceae</taxon>
        <taxon>Pyrenomonadales</taxon>
        <taxon>Geminigeraceae</taxon>
        <taxon>Guillardia</taxon>
    </lineage>
</organism>
<sequence length="269" mass="29455">MARIVVITSGKGGVGKTTVTANLGMALAQLGYRTALIDADIGLRNLDLLLGLENRVIYTALEVLSGECRLEQALIKDKRQPNLVLLPAAQNRNKDSVTEEQMKFLVNLLVNDYDYLLIDCPAGIETGFHNAIGPAQEAIVVTTPEIAAVRDADRVIGLLEANGIKQIKLLVNRLRPQMVKANDMMSVADVREILAIPLIGVIPEDECVIVSTNRGEPLVLEKNLSLPGLAFEHTACRLDGQEIEFLDLQSYSRGPLKRLRRFFLGSSTN</sequence>
<reference key="1">
    <citation type="journal article" date="1999" name="J. Mol. Evol.">
        <title>The plastid genome of the cryptophyte alga, Guillardia theta: complete sequence and conserved synteny groups confirm its common ancestry with red algae.</title>
        <authorList>
            <person name="Douglas S.E."/>
            <person name="Penny S.L."/>
        </authorList>
    </citation>
    <scope>NUCLEOTIDE SEQUENCE [LARGE SCALE GENOMIC DNA]</scope>
</reference>
<accession>O78436</accession>
<name>MIND_GUITH</name>
<feature type="chain" id="PRO_0000201977" description="Putative septum site-determining protein MinD">
    <location>
        <begin position="1"/>
        <end position="269"/>
    </location>
</feature>
<feature type="binding site" evidence="2">
    <location>
        <begin position="11"/>
        <end position="18"/>
    </location>
    <ligand>
        <name>ATP</name>
        <dbReference type="ChEBI" id="CHEBI:30616"/>
    </ligand>
</feature>
<protein>
    <recommendedName>
        <fullName>Putative septum site-determining protein MinD</fullName>
    </recommendedName>
</protein>
<gene>
    <name type="primary">minD</name>
</gene>
<dbReference type="EMBL" id="AF041468">
    <property type="protein sequence ID" value="AAC35621.1"/>
    <property type="molecule type" value="Genomic_DNA"/>
</dbReference>
<dbReference type="RefSeq" id="NP_050687.1">
    <property type="nucleotide sequence ID" value="NC_000926.1"/>
</dbReference>
<dbReference type="SMR" id="O78436"/>
<dbReference type="GeneID" id="856977"/>
<dbReference type="HOGENOM" id="CLU_037612_0_1_1"/>
<dbReference type="OMA" id="CESAKAY"/>
<dbReference type="GO" id="GO:0009507">
    <property type="term" value="C:chloroplast"/>
    <property type="evidence" value="ECO:0007669"/>
    <property type="project" value="UniProtKB-SubCell"/>
</dbReference>
<dbReference type="GO" id="GO:0009898">
    <property type="term" value="C:cytoplasmic side of plasma membrane"/>
    <property type="evidence" value="ECO:0007669"/>
    <property type="project" value="TreeGrafter"/>
</dbReference>
<dbReference type="GO" id="GO:0005829">
    <property type="term" value="C:cytosol"/>
    <property type="evidence" value="ECO:0007669"/>
    <property type="project" value="TreeGrafter"/>
</dbReference>
<dbReference type="GO" id="GO:0005524">
    <property type="term" value="F:ATP binding"/>
    <property type="evidence" value="ECO:0007669"/>
    <property type="project" value="UniProtKB-KW"/>
</dbReference>
<dbReference type="GO" id="GO:0016887">
    <property type="term" value="F:ATP hydrolysis activity"/>
    <property type="evidence" value="ECO:0007669"/>
    <property type="project" value="InterPro"/>
</dbReference>
<dbReference type="GO" id="GO:0051301">
    <property type="term" value="P:cell division"/>
    <property type="evidence" value="ECO:0007669"/>
    <property type="project" value="UniProtKB-KW"/>
</dbReference>
<dbReference type="GO" id="GO:0051782">
    <property type="term" value="P:negative regulation of cell division"/>
    <property type="evidence" value="ECO:0007669"/>
    <property type="project" value="TreeGrafter"/>
</dbReference>
<dbReference type="CDD" id="cd02036">
    <property type="entry name" value="MinD"/>
    <property type="match status" value="1"/>
</dbReference>
<dbReference type="FunFam" id="3.40.50.300:FF:000068">
    <property type="entry name" value="Site-determining protein"/>
    <property type="match status" value="1"/>
</dbReference>
<dbReference type="Gene3D" id="3.40.50.300">
    <property type="entry name" value="P-loop containing nucleotide triphosphate hydrolases"/>
    <property type="match status" value="1"/>
</dbReference>
<dbReference type="InterPro" id="IPR002586">
    <property type="entry name" value="CobQ/CobB/MinD/ParA_Nub-bd_dom"/>
</dbReference>
<dbReference type="InterPro" id="IPR010223">
    <property type="entry name" value="MinD"/>
</dbReference>
<dbReference type="InterPro" id="IPR025501">
    <property type="entry name" value="MinD_FleN"/>
</dbReference>
<dbReference type="InterPro" id="IPR027417">
    <property type="entry name" value="P-loop_NTPase"/>
</dbReference>
<dbReference type="InterPro" id="IPR050625">
    <property type="entry name" value="ParA/MinD_ATPase"/>
</dbReference>
<dbReference type="NCBIfam" id="TIGR01968">
    <property type="entry name" value="minD_bact"/>
    <property type="match status" value="1"/>
</dbReference>
<dbReference type="PANTHER" id="PTHR43384:SF6">
    <property type="entry name" value="SEPTUM SITE-DETERMINING PROTEIN MIND HOMOLOG, CHLOROPLASTIC"/>
    <property type="match status" value="1"/>
</dbReference>
<dbReference type="PANTHER" id="PTHR43384">
    <property type="entry name" value="SEPTUM SITE-DETERMINING PROTEIN MIND HOMOLOG, CHLOROPLASTIC-RELATED"/>
    <property type="match status" value="1"/>
</dbReference>
<dbReference type="Pfam" id="PF01656">
    <property type="entry name" value="CbiA"/>
    <property type="match status" value="1"/>
</dbReference>
<dbReference type="PIRSF" id="PIRSF003092">
    <property type="entry name" value="MinD"/>
    <property type="match status" value="1"/>
</dbReference>
<dbReference type="SUPFAM" id="SSF52540">
    <property type="entry name" value="P-loop containing nucleoside triphosphate hydrolases"/>
    <property type="match status" value="1"/>
</dbReference>